<comment type="function">
    <text evidence="1">Tetrapolymerization of the monopyrrole PBG into the hydroxymethylbilane pre-uroporphyrinogen in several discrete steps.</text>
</comment>
<comment type="catalytic activity">
    <reaction evidence="1">
        <text>4 porphobilinogen + H2O = hydroxymethylbilane + 4 NH4(+)</text>
        <dbReference type="Rhea" id="RHEA:13185"/>
        <dbReference type="ChEBI" id="CHEBI:15377"/>
        <dbReference type="ChEBI" id="CHEBI:28938"/>
        <dbReference type="ChEBI" id="CHEBI:57845"/>
        <dbReference type="ChEBI" id="CHEBI:58126"/>
        <dbReference type="EC" id="2.5.1.61"/>
    </reaction>
</comment>
<comment type="cofactor">
    <cofactor evidence="1">
        <name>dipyrromethane</name>
        <dbReference type="ChEBI" id="CHEBI:60342"/>
    </cofactor>
    <text evidence="1">Binds 1 dipyrromethane group covalently.</text>
</comment>
<comment type="pathway">
    <text evidence="1">Porphyrin-containing compound metabolism; protoporphyrin-IX biosynthesis; coproporphyrinogen-III from 5-aminolevulinate: step 2/4.</text>
</comment>
<comment type="subunit">
    <text evidence="1">Monomer.</text>
</comment>
<comment type="miscellaneous">
    <text evidence="1">The porphobilinogen subunits are added to the dipyrromethane group.</text>
</comment>
<comment type="similarity">
    <text evidence="1">Belongs to the HMBS family.</text>
</comment>
<reference key="1">
    <citation type="submission" date="2009-01" db="EMBL/GenBank/DDBJ databases">
        <title>Complete sequence of Geobacter sp. FRC-32.</title>
        <authorList>
            <consortium name="US DOE Joint Genome Institute"/>
            <person name="Lucas S."/>
            <person name="Copeland A."/>
            <person name="Lapidus A."/>
            <person name="Glavina del Rio T."/>
            <person name="Dalin E."/>
            <person name="Tice H."/>
            <person name="Bruce D."/>
            <person name="Goodwin L."/>
            <person name="Pitluck S."/>
            <person name="Saunders E."/>
            <person name="Brettin T."/>
            <person name="Detter J.C."/>
            <person name="Han C."/>
            <person name="Larimer F."/>
            <person name="Land M."/>
            <person name="Hauser L."/>
            <person name="Kyrpides N."/>
            <person name="Ovchinnikova G."/>
            <person name="Kostka J."/>
            <person name="Richardson P."/>
        </authorList>
    </citation>
    <scope>NUCLEOTIDE SEQUENCE [LARGE SCALE GENOMIC DNA]</scope>
    <source>
        <strain>DSM 22248 / JCM 15807 / FRC-32</strain>
    </source>
</reference>
<proteinExistence type="inferred from homology"/>
<protein>
    <recommendedName>
        <fullName evidence="1">Porphobilinogen deaminase</fullName>
        <shortName evidence="1">PBG</shortName>
        <ecNumber evidence="1">2.5.1.61</ecNumber>
    </recommendedName>
    <alternativeName>
        <fullName evidence="1">Hydroxymethylbilane synthase</fullName>
        <shortName evidence="1">HMBS</shortName>
    </alternativeName>
    <alternativeName>
        <fullName evidence="1">Pre-uroporphyrinogen synthase</fullName>
    </alternativeName>
</protein>
<keyword id="KW-0627">Porphyrin biosynthesis</keyword>
<keyword id="KW-1185">Reference proteome</keyword>
<keyword id="KW-0808">Transferase</keyword>
<sequence length="318" mass="34662">MALKQLRIGTRASQLALWQANWVKSELEQRYPGMEVSLVKIKTIGDKILDVPLAQVGGKGLFVKEIEEAMLRGDIDIAVHSMKDVPTEFPEGLGLHCITEREDPRDAVISRGTKFADLPQGAKIGTSALRRQAQLLKVRPDMEMVIIRGNVETRINKLETEKLDAVILAAAGLKRLGFTEKVAEYLPTDLSIPAIGQGALGIECRLDNEEVKQTIDFFNHPATAYAVRAERALLWRCEGGCQVPIAAFGEVTGSDLKLVGFIASVDGKTSVRGTITGPAADCEKLGIKLAEQLLADGGHAILAEVYQREVSREKEIPV</sequence>
<name>HEM3_GEODF</name>
<evidence type="ECO:0000255" key="1">
    <source>
        <dbReference type="HAMAP-Rule" id="MF_00260"/>
    </source>
</evidence>
<feature type="chain" id="PRO_1000125672" description="Porphobilinogen deaminase">
    <location>
        <begin position="1"/>
        <end position="318"/>
    </location>
</feature>
<feature type="modified residue" description="S-(dipyrrolylmethanemethyl)cysteine" evidence="1">
    <location>
        <position position="241"/>
    </location>
</feature>
<organism>
    <name type="scientific">Geotalea daltonii (strain DSM 22248 / JCM 15807 / FRC-32)</name>
    <name type="common">Geobacter daltonii</name>
    <dbReference type="NCBI Taxonomy" id="316067"/>
    <lineage>
        <taxon>Bacteria</taxon>
        <taxon>Pseudomonadati</taxon>
        <taxon>Thermodesulfobacteriota</taxon>
        <taxon>Desulfuromonadia</taxon>
        <taxon>Geobacterales</taxon>
        <taxon>Geobacteraceae</taxon>
        <taxon>Geotalea</taxon>
    </lineage>
</organism>
<accession>B9M416</accession>
<dbReference type="EC" id="2.5.1.61" evidence="1"/>
<dbReference type="EMBL" id="CP001390">
    <property type="protein sequence ID" value="ACM19659.1"/>
    <property type="molecule type" value="Genomic_DNA"/>
</dbReference>
<dbReference type="RefSeq" id="WP_012646388.1">
    <property type="nucleotide sequence ID" value="NC_011979.1"/>
</dbReference>
<dbReference type="SMR" id="B9M416"/>
<dbReference type="STRING" id="316067.Geob_1299"/>
<dbReference type="KEGG" id="geo:Geob_1299"/>
<dbReference type="eggNOG" id="COG0181">
    <property type="taxonomic scope" value="Bacteria"/>
</dbReference>
<dbReference type="HOGENOM" id="CLU_019704_0_2_7"/>
<dbReference type="OrthoDB" id="9810298at2"/>
<dbReference type="UniPathway" id="UPA00251">
    <property type="reaction ID" value="UER00319"/>
</dbReference>
<dbReference type="Proteomes" id="UP000007721">
    <property type="component" value="Chromosome"/>
</dbReference>
<dbReference type="GO" id="GO:0005737">
    <property type="term" value="C:cytoplasm"/>
    <property type="evidence" value="ECO:0007669"/>
    <property type="project" value="TreeGrafter"/>
</dbReference>
<dbReference type="GO" id="GO:0004418">
    <property type="term" value="F:hydroxymethylbilane synthase activity"/>
    <property type="evidence" value="ECO:0007669"/>
    <property type="project" value="UniProtKB-UniRule"/>
</dbReference>
<dbReference type="GO" id="GO:0006782">
    <property type="term" value="P:protoporphyrinogen IX biosynthetic process"/>
    <property type="evidence" value="ECO:0007669"/>
    <property type="project" value="UniProtKB-UniRule"/>
</dbReference>
<dbReference type="CDD" id="cd13646">
    <property type="entry name" value="PBP2_EcHMBS_like"/>
    <property type="match status" value="1"/>
</dbReference>
<dbReference type="FunFam" id="3.30.160.40:FF:000002">
    <property type="entry name" value="Porphobilinogen deaminase"/>
    <property type="match status" value="1"/>
</dbReference>
<dbReference type="FunFam" id="3.40.190.10:FF:000004">
    <property type="entry name" value="Porphobilinogen deaminase"/>
    <property type="match status" value="1"/>
</dbReference>
<dbReference type="FunFam" id="3.40.190.10:FF:000005">
    <property type="entry name" value="Porphobilinogen deaminase"/>
    <property type="match status" value="1"/>
</dbReference>
<dbReference type="Gene3D" id="3.40.190.10">
    <property type="entry name" value="Periplasmic binding protein-like II"/>
    <property type="match status" value="2"/>
</dbReference>
<dbReference type="Gene3D" id="3.30.160.40">
    <property type="entry name" value="Porphobilinogen deaminase, C-terminal domain"/>
    <property type="match status" value="1"/>
</dbReference>
<dbReference type="HAMAP" id="MF_00260">
    <property type="entry name" value="Porphobil_deam"/>
    <property type="match status" value="1"/>
</dbReference>
<dbReference type="InterPro" id="IPR000860">
    <property type="entry name" value="HemC"/>
</dbReference>
<dbReference type="InterPro" id="IPR022419">
    <property type="entry name" value="Porphobilin_deaminase_cofac_BS"/>
</dbReference>
<dbReference type="InterPro" id="IPR022417">
    <property type="entry name" value="Porphobilin_deaminase_N"/>
</dbReference>
<dbReference type="InterPro" id="IPR022418">
    <property type="entry name" value="Porphobilinogen_deaminase_C"/>
</dbReference>
<dbReference type="InterPro" id="IPR036803">
    <property type="entry name" value="Porphobilinogen_deaminase_C_sf"/>
</dbReference>
<dbReference type="NCBIfam" id="TIGR00212">
    <property type="entry name" value="hemC"/>
    <property type="match status" value="1"/>
</dbReference>
<dbReference type="PANTHER" id="PTHR11557">
    <property type="entry name" value="PORPHOBILINOGEN DEAMINASE"/>
    <property type="match status" value="1"/>
</dbReference>
<dbReference type="PANTHER" id="PTHR11557:SF0">
    <property type="entry name" value="PORPHOBILINOGEN DEAMINASE"/>
    <property type="match status" value="1"/>
</dbReference>
<dbReference type="Pfam" id="PF01379">
    <property type="entry name" value="Porphobil_deam"/>
    <property type="match status" value="1"/>
</dbReference>
<dbReference type="Pfam" id="PF03900">
    <property type="entry name" value="Porphobil_deamC"/>
    <property type="match status" value="1"/>
</dbReference>
<dbReference type="PIRSF" id="PIRSF001438">
    <property type="entry name" value="4pyrrol_synth_OHMeBilane_synth"/>
    <property type="match status" value="1"/>
</dbReference>
<dbReference type="PRINTS" id="PR00151">
    <property type="entry name" value="PORPHBDMNASE"/>
</dbReference>
<dbReference type="SUPFAM" id="SSF53850">
    <property type="entry name" value="Periplasmic binding protein-like II"/>
    <property type="match status" value="1"/>
</dbReference>
<dbReference type="SUPFAM" id="SSF54782">
    <property type="entry name" value="Porphobilinogen deaminase (hydroxymethylbilane synthase), C-terminal domain"/>
    <property type="match status" value="1"/>
</dbReference>
<dbReference type="PROSITE" id="PS00533">
    <property type="entry name" value="PORPHOBILINOGEN_DEAM"/>
    <property type="match status" value="1"/>
</dbReference>
<gene>
    <name evidence="1" type="primary">hemC</name>
    <name type="ordered locus">Geob_1299</name>
</gene>